<accession>Q8ZC17</accession>
<accession>Q0WC73</accession>
<accession>Q74WV8</accession>
<accession>Q7CK55</accession>
<protein>
    <recommendedName>
        <fullName evidence="1">Pyrimidine/purine nucleoside phosphorylase</fullName>
        <ecNumber evidence="1">2.4.2.1</ecNumber>
        <ecNumber evidence="1">2.4.2.2</ecNumber>
    </recommendedName>
    <alternativeName>
        <fullName evidence="1">Adenosine phosphorylase</fullName>
    </alternativeName>
    <alternativeName>
        <fullName evidence="1">Cytidine phosphorylase</fullName>
    </alternativeName>
    <alternativeName>
        <fullName evidence="1">Guanosine phosphorylase</fullName>
    </alternativeName>
    <alternativeName>
        <fullName evidence="1">Inosine phosphorylase</fullName>
    </alternativeName>
    <alternativeName>
        <fullName evidence="1">Thymidine phosphorylase</fullName>
    </alternativeName>
    <alternativeName>
        <fullName evidence="1">Uridine phosphorylase</fullName>
    </alternativeName>
    <alternativeName>
        <fullName evidence="1">Xanthosine phosphorylase</fullName>
    </alternativeName>
</protein>
<keyword id="KW-0328">Glycosyltransferase</keyword>
<keyword id="KW-1185">Reference proteome</keyword>
<keyword id="KW-0808">Transferase</keyword>
<proteinExistence type="inferred from homology"/>
<dbReference type="EC" id="2.4.2.1" evidence="1"/>
<dbReference type="EC" id="2.4.2.2" evidence="1"/>
<dbReference type="EMBL" id="AL590842">
    <property type="protein sequence ID" value="CAL21807.1"/>
    <property type="molecule type" value="Genomic_DNA"/>
</dbReference>
<dbReference type="EMBL" id="AE009952">
    <property type="protein sequence ID" value="AAM84554.1"/>
    <property type="molecule type" value="Genomic_DNA"/>
</dbReference>
<dbReference type="EMBL" id="AE017042">
    <property type="protein sequence ID" value="AAS60988.1"/>
    <property type="molecule type" value="Genomic_DNA"/>
</dbReference>
<dbReference type="PIR" id="AD0390">
    <property type="entry name" value="AD0390"/>
</dbReference>
<dbReference type="RefSeq" id="WP_002208692.1">
    <property type="nucleotide sequence ID" value="NZ_WUCM01000034.1"/>
</dbReference>
<dbReference type="RefSeq" id="YP_002348115.1">
    <property type="nucleotide sequence ID" value="NC_003143.1"/>
</dbReference>
<dbReference type="SMR" id="Q8ZC17"/>
<dbReference type="STRING" id="214092.YPO3213"/>
<dbReference type="PaxDb" id="214092-YPO3213"/>
<dbReference type="DNASU" id="1145920"/>
<dbReference type="EnsemblBacteria" id="AAS60988">
    <property type="protein sequence ID" value="AAS60988"/>
    <property type="gene ID" value="YP_0722"/>
</dbReference>
<dbReference type="GeneID" id="57975503"/>
<dbReference type="KEGG" id="ype:YPO3213"/>
<dbReference type="KEGG" id="ypk:y0973"/>
<dbReference type="KEGG" id="ypm:YP_0722"/>
<dbReference type="PATRIC" id="fig|214092.21.peg.3673"/>
<dbReference type="eggNOG" id="COG3123">
    <property type="taxonomic scope" value="Bacteria"/>
</dbReference>
<dbReference type="HOGENOM" id="CLU_157874_0_0_6"/>
<dbReference type="OMA" id="ADYCCSY"/>
<dbReference type="OrthoDB" id="9793848at2"/>
<dbReference type="Proteomes" id="UP000000815">
    <property type="component" value="Chromosome"/>
</dbReference>
<dbReference type="Proteomes" id="UP000001019">
    <property type="component" value="Chromosome"/>
</dbReference>
<dbReference type="Proteomes" id="UP000002490">
    <property type="component" value="Chromosome"/>
</dbReference>
<dbReference type="GO" id="GO:0005829">
    <property type="term" value="C:cytosol"/>
    <property type="evidence" value="ECO:0000318"/>
    <property type="project" value="GO_Central"/>
</dbReference>
<dbReference type="GO" id="GO:0047975">
    <property type="term" value="F:guanosine phosphorylase activity"/>
    <property type="evidence" value="ECO:0007669"/>
    <property type="project" value="UniProtKB-EC"/>
</dbReference>
<dbReference type="GO" id="GO:0004731">
    <property type="term" value="F:purine-nucleoside phosphorylase activity"/>
    <property type="evidence" value="ECO:0000318"/>
    <property type="project" value="GO_Central"/>
</dbReference>
<dbReference type="GO" id="GO:0016154">
    <property type="term" value="F:pyrimidine-nucleoside phosphorylase activity"/>
    <property type="evidence" value="ECO:0000318"/>
    <property type="project" value="GO_Central"/>
</dbReference>
<dbReference type="GO" id="GO:0009032">
    <property type="term" value="F:thymidine phosphorylase activity"/>
    <property type="evidence" value="ECO:0007669"/>
    <property type="project" value="UniProtKB-EC"/>
</dbReference>
<dbReference type="GO" id="GO:0004850">
    <property type="term" value="F:uridine phosphorylase activity"/>
    <property type="evidence" value="ECO:0007669"/>
    <property type="project" value="UniProtKB-EC"/>
</dbReference>
<dbReference type="FunFam" id="2.60.120.10:FF:000016">
    <property type="entry name" value="Pyrimidine/purine nucleoside phosphorylase"/>
    <property type="match status" value="1"/>
</dbReference>
<dbReference type="Gene3D" id="2.60.120.10">
    <property type="entry name" value="Jelly Rolls"/>
    <property type="match status" value="1"/>
</dbReference>
<dbReference type="HAMAP" id="MF_01537">
    <property type="entry name" value="Nucleos_phosphorylase_PpnP"/>
    <property type="match status" value="1"/>
</dbReference>
<dbReference type="InterPro" id="IPR009664">
    <property type="entry name" value="Ppnp"/>
</dbReference>
<dbReference type="InterPro" id="IPR014710">
    <property type="entry name" value="RmlC-like_jellyroll"/>
</dbReference>
<dbReference type="InterPro" id="IPR011051">
    <property type="entry name" value="RmlC_Cupin_sf"/>
</dbReference>
<dbReference type="NCBIfam" id="NF007875">
    <property type="entry name" value="PRK10579.1"/>
    <property type="match status" value="1"/>
</dbReference>
<dbReference type="PANTHER" id="PTHR36540">
    <property type="entry name" value="PYRIMIDINE/PURINE NUCLEOSIDE PHOSPHORYLASE"/>
    <property type="match status" value="1"/>
</dbReference>
<dbReference type="PANTHER" id="PTHR36540:SF1">
    <property type="entry name" value="PYRIMIDINE_PURINE NUCLEOSIDE PHOSPHORYLASE"/>
    <property type="match status" value="1"/>
</dbReference>
<dbReference type="Pfam" id="PF06865">
    <property type="entry name" value="Ppnp"/>
    <property type="match status" value="1"/>
</dbReference>
<dbReference type="SUPFAM" id="SSF51182">
    <property type="entry name" value="RmlC-like cupins"/>
    <property type="match status" value="1"/>
</dbReference>
<sequence>MLKFNEYFTGKVKSIGFDSDSIGPASVGVMEKGEYTFSTAKAEEMTVITGSLKVLIPGSPDWQTFMPGETFYIPGESEFNLQVAEASSYLCKYLS</sequence>
<gene>
    <name evidence="1" type="primary">ppnP</name>
    <name type="ordered locus">YPO3213</name>
    <name type="ordered locus">y0973</name>
    <name type="ordered locus">YP_0722</name>
</gene>
<organism>
    <name type="scientific">Yersinia pestis</name>
    <dbReference type="NCBI Taxonomy" id="632"/>
    <lineage>
        <taxon>Bacteria</taxon>
        <taxon>Pseudomonadati</taxon>
        <taxon>Pseudomonadota</taxon>
        <taxon>Gammaproteobacteria</taxon>
        <taxon>Enterobacterales</taxon>
        <taxon>Yersiniaceae</taxon>
        <taxon>Yersinia</taxon>
    </lineage>
</organism>
<reference key="1">
    <citation type="journal article" date="2001" name="Nature">
        <title>Genome sequence of Yersinia pestis, the causative agent of plague.</title>
        <authorList>
            <person name="Parkhill J."/>
            <person name="Wren B.W."/>
            <person name="Thomson N.R."/>
            <person name="Titball R.W."/>
            <person name="Holden M.T.G."/>
            <person name="Prentice M.B."/>
            <person name="Sebaihia M."/>
            <person name="James K.D."/>
            <person name="Churcher C.M."/>
            <person name="Mungall K.L."/>
            <person name="Baker S."/>
            <person name="Basham D."/>
            <person name="Bentley S.D."/>
            <person name="Brooks K."/>
            <person name="Cerdeno-Tarraga A.-M."/>
            <person name="Chillingworth T."/>
            <person name="Cronin A."/>
            <person name="Davies R.M."/>
            <person name="Davis P."/>
            <person name="Dougan G."/>
            <person name="Feltwell T."/>
            <person name="Hamlin N."/>
            <person name="Holroyd S."/>
            <person name="Jagels K."/>
            <person name="Karlyshev A.V."/>
            <person name="Leather S."/>
            <person name="Moule S."/>
            <person name="Oyston P.C.F."/>
            <person name="Quail M.A."/>
            <person name="Rutherford K.M."/>
            <person name="Simmonds M."/>
            <person name="Skelton J."/>
            <person name="Stevens K."/>
            <person name="Whitehead S."/>
            <person name="Barrell B.G."/>
        </authorList>
    </citation>
    <scope>NUCLEOTIDE SEQUENCE [LARGE SCALE GENOMIC DNA]</scope>
    <source>
        <strain>CO-92 / Biovar Orientalis</strain>
    </source>
</reference>
<reference key="2">
    <citation type="journal article" date="2002" name="J. Bacteriol.">
        <title>Genome sequence of Yersinia pestis KIM.</title>
        <authorList>
            <person name="Deng W."/>
            <person name="Burland V."/>
            <person name="Plunkett G. III"/>
            <person name="Boutin A."/>
            <person name="Mayhew G.F."/>
            <person name="Liss P."/>
            <person name="Perna N.T."/>
            <person name="Rose D.J."/>
            <person name="Mau B."/>
            <person name="Zhou S."/>
            <person name="Schwartz D.C."/>
            <person name="Fetherston J.D."/>
            <person name="Lindler L.E."/>
            <person name="Brubaker R.R."/>
            <person name="Plano G.V."/>
            <person name="Straley S.C."/>
            <person name="McDonough K.A."/>
            <person name="Nilles M.L."/>
            <person name="Matson J.S."/>
            <person name="Blattner F.R."/>
            <person name="Perry R.D."/>
        </authorList>
    </citation>
    <scope>NUCLEOTIDE SEQUENCE [LARGE SCALE GENOMIC DNA]</scope>
    <source>
        <strain>KIM10+ / Biovar Mediaevalis</strain>
    </source>
</reference>
<reference key="3">
    <citation type="journal article" date="2004" name="DNA Res.">
        <title>Complete genome sequence of Yersinia pestis strain 91001, an isolate avirulent to humans.</title>
        <authorList>
            <person name="Song Y."/>
            <person name="Tong Z."/>
            <person name="Wang J."/>
            <person name="Wang L."/>
            <person name="Guo Z."/>
            <person name="Han Y."/>
            <person name="Zhang J."/>
            <person name="Pei D."/>
            <person name="Zhou D."/>
            <person name="Qin H."/>
            <person name="Pang X."/>
            <person name="Han Y."/>
            <person name="Zhai J."/>
            <person name="Li M."/>
            <person name="Cui B."/>
            <person name="Qi Z."/>
            <person name="Jin L."/>
            <person name="Dai R."/>
            <person name="Chen F."/>
            <person name="Li S."/>
            <person name="Ye C."/>
            <person name="Du Z."/>
            <person name="Lin W."/>
            <person name="Wang J."/>
            <person name="Yu J."/>
            <person name="Yang H."/>
            <person name="Wang J."/>
            <person name="Huang P."/>
            <person name="Yang R."/>
        </authorList>
    </citation>
    <scope>NUCLEOTIDE SEQUENCE [LARGE SCALE GENOMIC DNA]</scope>
    <source>
        <strain>91001 / Biovar Mediaevalis</strain>
    </source>
</reference>
<comment type="function">
    <text evidence="1">Catalyzes the phosphorolysis of diverse nucleosides, yielding D-ribose 1-phosphate and the respective free bases. Can use uridine, adenosine, guanosine, cytidine, thymidine, inosine and xanthosine as substrates. Also catalyzes the reverse reactions.</text>
</comment>
<comment type="catalytic activity">
    <reaction evidence="1">
        <text>a purine D-ribonucleoside + phosphate = a purine nucleobase + alpha-D-ribose 1-phosphate</text>
        <dbReference type="Rhea" id="RHEA:19805"/>
        <dbReference type="ChEBI" id="CHEBI:26386"/>
        <dbReference type="ChEBI" id="CHEBI:43474"/>
        <dbReference type="ChEBI" id="CHEBI:57720"/>
        <dbReference type="ChEBI" id="CHEBI:142355"/>
        <dbReference type="EC" id="2.4.2.1"/>
    </reaction>
</comment>
<comment type="catalytic activity">
    <reaction evidence="1">
        <text>adenosine + phosphate = alpha-D-ribose 1-phosphate + adenine</text>
        <dbReference type="Rhea" id="RHEA:27642"/>
        <dbReference type="ChEBI" id="CHEBI:16335"/>
        <dbReference type="ChEBI" id="CHEBI:16708"/>
        <dbReference type="ChEBI" id="CHEBI:43474"/>
        <dbReference type="ChEBI" id="CHEBI:57720"/>
        <dbReference type="EC" id="2.4.2.1"/>
    </reaction>
</comment>
<comment type="catalytic activity">
    <reaction evidence="1">
        <text>cytidine + phosphate = cytosine + alpha-D-ribose 1-phosphate</text>
        <dbReference type="Rhea" id="RHEA:52540"/>
        <dbReference type="ChEBI" id="CHEBI:16040"/>
        <dbReference type="ChEBI" id="CHEBI:17562"/>
        <dbReference type="ChEBI" id="CHEBI:43474"/>
        <dbReference type="ChEBI" id="CHEBI:57720"/>
        <dbReference type="EC" id="2.4.2.2"/>
    </reaction>
</comment>
<comment type="catalytic activity">
    <reaction evidence="1">
        <text>guanosine + phosphate = alpha-D-ribose 1-phosphate + guanine</text>
        <dbReference type="Rhea" id="RHEA:13233"/>
        <dbReference type="ChEBI" id="CHEBI:16235"/>
        <dbReference type="ChEBI" id="CHEBI:16750"/>
        <dbReference type="ChEBI" id="CHEBI:43474"/>
        <dbReference type="ChEBI" id="CHEBI:57720"/>
        <dbReference type="EC" id="2.4.2.1"/>
    </reaction>
</comment>
<comment type="catalytic activity">
    <reaction evidence="1">
        <text>inosine + phosphate = alpha-D-ribose 1-phosphate + hypoxanthine</text>
        <dbReference type="Rhea" id="RHEA:27646"/>
        <dbReference type="ChEBI" id="CHEBI:17368"/>
        <dbReference type="ChEBI" id="CHEBI:17596"/>
        <dbReference type="ChEBI" id="CHEBI:43474"/>
        <dbReference type="ChEBI" id="CHEBI:57720"/>
        <dbReference type="EC" id="2.4.2.1"/>
    </reaction>
</comment>
<comment type="catalytic activity">
    <reaction evidence="1">
        <text>thymidine + phosphate = 2-deoxy-alpha-D-ribose 1-phosphate + thymine</text>
        <dbReference type="Rhea" id="RHEA:16037"/>
        <dbReference type="ChEBI" id="CHEBI:17748"/>
        <dbReference type="ChEBI" id="CHEBI:17821"/>
        <dbReference type="ChEBI" id="CHEBI:43474"/>
        <dbReference type="ChEBI" id="CHEBI:57259"/>
        <dbReference type="EC" id="2.4.2.2"/>
    </reaction>
</comment>
<comment type="catalytic activity">
    <reaction evidence="1">
        <text>uridine + phosphate = alpha-D-ribose 1-phosphate + uracil</text>
        <dbReference type="Rhea" id="RHEA:24388"/>
        <dbReference type="ChEBI" id="CHEBI:16704"/>
        <dbReference type="ChEBI" id="CHEBI:17568"/>
        <dbReference type="ChEBI" id="CHEBI:43474"/>
        <dbReference type="ChEBI" id="CHEBI:57720"/>
        <dbReference type="EC" id="2.4.2.2"/>
    </reaction>
</comment>
<comment type="catalytic activity">
    <reaction evidence="1">
        <text>xanthosine + phosphate = alpha-D-ribose 1-phosphate + xanthine</text>
        <dbReference type="Rhea" id="RHEA:27638"/>
        <dbReference type="ChEBI" id="CHEBI:17712"/>
        <dbReference type="ChEBI" id="CHEBI:18107"/>
        <dbReference type="ChEBI" id="CHEBI:43474"/>
        <dbReference type="ChEBI" id="CHEBI:57720"/>
        <dbReference type="EC" id="2.4.2.1"/>
    </reaction>
</comment>
<comment type="similarity">
    <text evidence="1">Belongs to the nucleoside phosphorylase PpnP family.</text>
</comment>
<name>PPNP_YERPE</name>
<evidence type="ECO:0000255" key="1">
    <source>
        <dbReference type="HAMAP-Rule" id="MF_01537"/>
    </source>
</evidence>
<feature type="chain" id="PRO_0000211790" description="Pyrimidine/purine nucleoside phosphorylase">
    <location>
        <begin position="1"/>
        <end position="95"/>
    </location>
</feature>